<proteinExistence type="inferred from homology"/>
<protein>
    <recommendedName>
        <fullName evidence="1">Ribosomal protein uS12 methylthiotransferase RimO</fullName>
        <shortName evidence="1">uS12 MTTase</shortName>
        <shortName evidence="1">uS12 methylthiotransferase</shortName>
        <ecNumber evidence="1">2.8.4.4</ecNumber>
    </recommendedName>
    <alternativeName>
        <fullName evidence="1">Ribosomal protein uS12 (aspartate-C(3))-methylthiotransferase</fullName>
    </alternativeName>
    <alternativeName>
        <fullName evidence="1">Ribosome maturation factor RimO</fullName>
    </alternativeName>
</protein>
<accession>B2A3C0</accession>
<dbReference type="EC" id="2.8.4.4" evidence="1"/>
<dbReference type="EMBL" id="CP001034">
    <property type="protein sequence ID" value="ACB85050.1"/>
    <property type="molecule type" value="Genomic_DNA"/>
</dbReference>
<dbReference type="RefSeq" id="WP_012447922.1">
    <property type="nucleotide sequence ID" value="NC_010718.1"/>
</dbReference>
<dbReference type="SMR" id="B2A3C0"/>
<dbReference type="STRING" id="457570.Nther_1467"/>
<dbReference type="KEGG" id="nth:Nther_1467"/>
<dbReference type="eggNOG" id="COG0621">
    <property type="taxonomic scope" value="Bacteria"/>
</dbReference>
<dbReference type="HOGENOM" id="CLU_018697_0_1_9"/>
<dbReference type="InParanoid" id="B2A3C0"/>
<dbReference type="OrthoDB" id="9805215at2"/>
<dbReference type="Proteomes" id="UP000001683">
    <property type="component" value="Chromosome"/>
</dbReference>
<dbReference type="GO" id="GO:0005829">
    <property type="term" value="C:cytosol"/>
    <property type="evidence" value="ECO:0007669"/>
    <property type="project" value="TreeGrafter"/>
</dbReference>
<dbReference type="GO" id="GO:0051539">
    <property type="term" value="F:4 iron, 4 sulfur cluster binding"/>
    <property type="evidence" value="ECO:0007669"/>
    <property type="project" value="UniProtKB-UniRule"/>
</dbReference>
<dbReference type="GO" id="GO:0035599">
    <property type="term" value="F:aspartic acid methylthiotransferase activity"/>
    <property type="evidence" value="ECO:0007669"/>
    <property type="project" value="TreeGrafter"/>
</dbReference>
<dbReference type="GO" id="GO:0046872">
    <property type="term" value="F:metal ion binding"/>
    <property type="evidence" value="ECO:0007669"/>
    <property type="project" value="UniProtKB-KW"/>
</dbReference>
<dbReference type="GO" id="GO:0103039">
    <property type="term" value="F:protein methylthiotransferase activity"/>
    <property type="evidence" value="ECO:0007669"/>
    <property type="project" value="UniProtKB-EC"/>
</dbReference>
<dbReference type="GO" id="GO:0006400">
    <property type="term" value="P:tRNA modification"/>
    <property type="evidence" value="ECO:0007669"/>
    <property type="project" value="InterPro"/>
</dbReference>
<dbReference type="CDD" id="cd01335">
    <property type="entry name" value="Radical_SAM"/>
    <property type="match status" value="1"/>
</dbReference>
<dbReference type="FunFam" id="3.80.30.20:FF:000001">
    <property type="entry name" value="tRNA-2-methylthio-N(6)-dimethylallyladenosine synthase 2"/>
    <property type="match status" value="1"/>
</dbReference>
<dbReference type="Gene3D" id="3.40.50.12160">
    <property type="entry name" value="Methylthiotransferase, N-terminal domain"/>
    <property type="match status" value="1"/>
</dbReference>
<dbReference type="Gene3D" id="2.40.50.140">
    <property type="entry name" value="Nucleic acid-binding proteins"/>
    <property type="match status" value="1"/>
</dbReference>
<dbReference type="Gene3D" id="3.80.30.20">
    <property type="entry name" value="tm_1862 like domain"/>
    <property type="match status" value="1"/>
</dbReference>
<dbReference type="HAMAP" id="MF_01865">
    <property type="entry name" value="MTTase_RimO"/>
    <property type="match status" value="1"/>
</dbReference>
<dbReference type="InterPro" id="IPR006638">
    <property type="entry name" value="Elp3/MiaA/NifB-like_rSAM"/>
</dbReference>
<dbReference type="InterPro" id="IPR005839">
    <property type="entry name" value="Methylthiotransferase"/>
</dbReference>
<dbReference type="InterPro" id="IPR020612">
    <property type="entry name" value="Methylthiotransferase_CS"/>
</dbReference>
<dbReference type="InterPro" id="IPR013848">
    <property type="entry name" value="Methylthiotransferase_N"/>
</dbReference>
<dbReference type="InterPro" id="IPR038135">
    <property type="entry name" value="Methylthiotransferase_N_sf"/>
</dbReference>
<dbReference type="InterPro" id="IPR012340">
    <property type="entry name" value="NA-bd_OB-fold"/>
</dbReference>
<dbReference type="InterPro" id="IPR005840">
    <property type="entry name" value="Ribosomal_uS12_MeSTrfase_RimO"/>
</dbReference>
<dbReference type="InterPro" id="IPR007197">
    <property type="entry name" value="rSAM"/>
</dbReference>
<dbReference type="InterPro" id="IPR023404">
    <property type="entry name" value="rSAM_horseshoe"/>
</dbReference>
<dbReference type="InterPro" id="IPR002792">
    <property type="entry name" value="TRAM_dom"/>
</dbReference>
<dbReference type="NCBIfam" id="TIGR01125">
    <property type="entry name" value="30S ribosomal protein S12 methylthiotransferase RimO"/>
    <property type="match status" value="1"/>
</dbReference>
<dbReference type="NCBIfam" id="TIGR00089">
    <property type="entry name" value="MiaB/RimO family radical SAM methylthiotransferase"/>
    <property type="match status" value="1"/>
</dbReference>
<dbReference type="PANTHER" id="PTHR43837">
    <property type="entry name" value="RIBOSOMAL PROTEIN S12 METHYLTHIOTRANSFERASE RIMO"/>
    <property type="match status" value="1"/>
</dbReference>
<dbReference type="PANTHER" id="PTHR43837:SF1">
    <property type="entry name" value="RIBOSOMAL PROTEIN US12 METHYLTHIOTRANSFERASE RIMO"/>
    <property type="match status" value="1"/>
</dbReference>
<dbReference type="Pfam" id="PF04055">
    <property type="entry name" value="Radical_SAM"/>
    <property type="match status" value="1"/>
</dbReference>
<dbReference type="Pfam" id="PF18693">
    <property type="entry name" value="TRAM_2"/>
    <property type="match status" value="1"/>
</dbReference>
<dbReference type="Pfam" id="PF00919">
    <property type="entry name" value="UPF0004"/>
    <property type="match status" value="1"/>
</dbReference>
<dbReference type="SFLD" id="SFLDG01082">
    <property type="entry name" value="B12-binding_domain_containing"/>
    <property type="match status" value="1"/>
</dbReference>
<dbReference type="SFLD" id="SFLDS00029">
    <property type="entry name" value="Radical_SAM"/>
    <property type="match status" value="1"/>
</dbReference>
<dbReference type="SFLD" id="SFLDF00274">
    <property type="entry name" value="ribosomal_protein_S12_methylth"/>
    <property type="match status" value="1"/>
</dbReference>
<dbReference type="SMART" id="SM00729">
    <property type="entry name" value="Elp3"/>
    <property type="match status" value="1"/>
</dbReference>
<dbReference type="SUPFAM" id="SSF102114">
    <property type="entry name" value="Radical SAM enzymes"/>
    <property type="match status" value="1"/>
</dbReference>
<dbReference type="PROSITE" id="PS51449">
    <property type="entry name" value="MTTASE_N"/>
    <property type="match status" value="1"/>
</dbReference>
<dbReference type="PROSITE" id="PS01278">
    <property type="entry name" value="MTTASE_RADICAL"/>
    <property type="match status" value="1"/>
</dbReference>
<dbReference type="PROSITE" id="PS51918">
    <property type="entry name" value="RADICAL_SAM"/>
    <property type="match status" value="1"/>
</dbReference>
<dbReference type="PROSITE" id="PS50926">
    <property type="entry name" value="TRAM"/>
    <property type="match status" value="1"/>
</dbReference>
<sequence>MKVGIISLGCAKNQVDTEVMQGILENSNYKMTDDYYDADIIIVNTCGFIDDAKEESVDHILEVAQLKETGKLKVLIVAGCLSQRYQESLKEEIPEIDAMIGTDTQDKITEVISSALKGNYISFYDRLNKIDEQLFLRQPYQPGPSAYIKIAEGCHNYCSYCAIPLIRGGYRSRTIEDIKIEANHFIEKGSKELTLIAQDTTNYGSDIYGKFSLDTLLDELATIPGDFWIRVLYAYPTRITDSLIEVINRHEKICSYLDIPLQHIDDDILTSMNRGGNKEQILNLIHNLRKNIPDITLRTSLIVGFPGETDEKYQNLISFMQEIEFDHAGIFKYSDEEDTQAYNFKDKVSEDVKEQRYQEAWEVQKEITRKKNEGLVGTEMRVLIEEALEDEPTTKVGRTEGHAPEVDGAVIIPDCEASSGDFINVEIVQALDYDLIGEMTNEFS</sequence>
<gene>
    <name evidence="1" type="primary">rimO</name>
    <name type="ordered locus">Nther_1467</name>
</gene>
<feature type="chain" id="PRO_0000374900" description="Ribosomal protein uS12 methylthiotransferase RimO">
    <location>
        <begin position="1"/>
        <end position="444"/>
    </location>
</feature>
<feature type="domain" description="MTTase N-terminal" evidence="1">
    <location>
        <begin position="1"/>
        <end position="117"/>
    </location>
</feature>
<feature type="domain" description="Radical SAM core" evidence="2">
    <location>
        <begin position="140"/>
        <end position="370"/>
    </location>
</feature>
<feature type="domain" description="TRAM" evidence="1">
    <location>
        <begin position="373"/>
        <end position="441"/>
    </location>
</feature>
<feature type="binding site" evidence="1">
    <location>
        <position position="10"/>
    </location>
    <ligand>
        <name>[4Fe-4S] cluster</name>
        <dbReference type="ChEBI" id="CHEBI:49883"/>
        <label>1</label>
    </ligand>
</feature>
<feature type="binding site" evidence="1">
    <location>
        <position position="46"/>
    </location>
    <ligand>
        <name>[4Fe-4S] cluster</name>
        <dbReference type="ChEBI" id="CHEBI:49883"/>
        <label>1</label>
    </ligand>
</feature>
<feature type="binding site" evidence="1">
    <location>
        <position position="80"/>
    </location>
    <ligand>
        <name>[4Fe-4S] cluster</name>
        <dbReference type="ChEBI" id="CHEBI:49883"/>
        <label>1</label>
    </ligand>
</feature>
<feature type="binding site" evidence="1">
    <location>
        <position position="154"/>
    </location>
    <ligand>
        <name>[4Fe-4S] cluster</name>
        <dbReference type="ChEBI" id="CHEBI:49883"/>
        <label>2</label>
        <note>4Fe-4S-S-AdoMet</note>
    </ligand>
</feature>
<feature type="binding site" evidence="1">
    <location>
        <position position="158"/>
    </location>
    <ligand>
        <name>[4Fe-4S] cluster</name>
        <dbReference type="ChEBI" id="CHEBI:49883"/>
        <label>2</label>
        <note>4Fe-4S-S-AdoMet</note>
    </ligand>
</feature>
<feature type="binding site" evidence="1">
    <location>
        <position position="161"/>
    </location>
    <ligand>
        <name>[4Fe-4S] cluster</name>
        <dbReference type="ChEBI" id="CHEBI:49883"/>
        <label>2</label>
        <note>4Fe-4S-S-AdoMet</note>
    </ligand>
</feature>
<organism>
    <name type="scientific">Natranaerobius thermophilus (strain ATCC BAA-1301 / DSM 18059 / JW/NM-WN-LF)</name>
    <dbReference type="NCBI Taxonomy" id="457570"/>
    <lineage>
        <taxon>Bacteria</taxon>
        <taxon>Bacillati</taxon>
        <taxon>Bacillota</taxon>
        <taxon>Clostridia</taxon>
        <taxon>Natranaerobiales</taxon>
        <taxon>Natranaerobiaceae</taxon>
        <taxon>Natranaerobius</taxon>
    </lineage>
</organism>
<name>RIMO_NATTJ</name>
<comment type="function">
    <text evidence="1">Catalyzes the methylthiolation of an aspartic acid residue of ribosomal protein uS12.</text>
</comment>
<comment type="catalytic activity">
    <reaction evidence="1">
        <text>L-aspartate(89)-[ribosomal protein uS12]-hydrogen + (sulfur carrier)-SH + AH2 + 2 S-adenosyl-L-methionine = 3-methylsulfanyl-L-aspartate(89)-[ribosomal protein uS12]-hydrogen + (sulfur carrier)-H + 5'-deoxyadenosine + L-methionine + A + S-adenosyl-L-homocysteine + 2 H(+)</text>
        <dbReference type="Rhea" id="RHEA:37087"/>
        <dbReference type="Rhea" id="RHEA-COMP:10460"/>
        <dbReference type="Rhea" id="RHEA-COMP:10461"/>
        <dbReference type="Rhea" id="RHEA-COMP:14737"/>
        <dbReference type="Rhea" id="RHEA-COMP:14739"/>
        <dbReference type="ChEBI" id="CHEBI:13193"/>
        <dbReference type="ChEBI" id="CHEBI:15378"/>
        <dbReference type="ChEBI" id="CHEBI:17319"/>
        <dbReference type="ChEBI" id="CHEBI:17499"/>
        <dbReference type="ChEBI" id="CHEBI:29917"/>
        <dbReference type="ChEBI" id="CHEBI:29961"/>
        <dbReference type="ChEBI" id="CHEBI:57844"/>
        <dbReference type="ChEBI" id="CHEBI:57856"/>
        <dbReference type="ChEBI" id="CHEBI:59789"/>
        <dbReference type="ChEBI" id="CHEBI:64428"/>
        <dbReference type="ChEBI" id="CHEBI:73599"/>
        <dbReference type="EC" id="2.8.4.4"/>
    </reaction>
</comment>
<comment type="cofactor">
    <cofactor evidence="1">
        <name>[4Fe-4S] cluster</name>
        <dbReference type="ChEBI" id="CHEBI:49883"/>
    </cofactor>
    <text evidence="1">Binds 2 [4Fe-4S] clusters. One cluster is coordinated with 3 cysteines and an exchangeable S-adenosyl-L-methionine.</text>
</comment>
<comment type="subcellular location">
    <subcellularLocation>
        <location evidence="1">Cytoplasm</location>
    </subcellularLocation>
</comment>
<comment type="similarity">
    <text evidence="1">Belongs to the methylthiotransferase family. RimO subfamily.</text>
</comment>
<evidence type="ECO:0000255" key="1">
    <source>
        <dbReference type="HAMAP-Rule" id="MF_01865"/>
    </source>
</evidence>
<evidence type="ECO:0000255" key="2">
    <source>
        <dbReference type="PROSITE-ProRule" id="PRU01266"/>
    </source>
</evidence>
<reference key="1">
    <citation type="submission" date="2008-04" db="EMBL/GenBank/DDBJ databases">
        <title>Complete sequence of chromosome of Natranaerobius thermophilus JW/NM-WN-LF.</title>
        <authorList>
            <consortium name="US DOE Joint Genome Institute"/>
            <person name="Copeland A."/>
            <person name="Lucas S."/>
            <person name="Lapidus A."/>
            <person name="Glavina del Rio T."/>
            <person name="Dalin E."/>
            <person name="Tice H."/>
            <person name="Bruce D."/>
            <person name="Goodwin L."/>
            <person name="Pitluck S."/>
            <person name="Chertkov O."/>
            <person name="Brettin T."/>
            <person name="Detter J.C."/>
            <person name="Han C."/>
            <person name="Kuske C.R."/>
            <person name="Schmutz J."/>
            <person name="Larimer F."/>
            <person name="Land M."/>
            <person name="Hauser L."/>
            <person name="Kyrpides N."/>
            <person name="Lykidis A."/>
            <person name="Mesbah N.M."/>
            <person name="Wiegel J."/>
        </authorList>
    </citation>
    <scope>NUCLEOTIDE SEQUENCE [LARGE SCALE GENOMIC DNA]</scope>
    <source>
        <strain>ATCC BAA-1301 / DSM 18059 / JW/NM-WN-LF</strain>
    </source>
</reference>
<keyword id="KW-0004">4Fe-4S</keyword>
<keyword id="KW-0963">Cytoplasm</keyword>
<keyword id="KW-0408">Iron</keyword>
<keyword id="KW-0411">Iron-sulfur</keyword>
<keyword id="KW-0479">Metal-binding</keyword>
<keyword id="KW-1185">Reference proteome</keyword>
<keyword id="KW-0949">S-adenosyl-L-methionine</keyword>
<keyword id="KW-0808">Transferase</keyword>